<organism>
    <name type="scientific">Herpetosiphon aurantiacus (strain ATCC 23779 / DSM 785 / 114-95)</name>
    <dbReference type="NCBI Taxonomy" id="316274"/>
    <lineage>
        <taxon>Bacteria</taxon>
        <taxon>Bacillati</taxon>
        <taxon>Chloroflexota</taxon>
        <taxon>Chloroflexia</taxon>
        <taxon>Herpetosiphonales</taxon>
        <taxon>Herpetosiphonaceae</taxon>
        <taxon>Herpetosiphon</taxon>
    </lineage>
</organism>
<protein>
    <recommendedName>
        <fullName evidence="1">Lon protease 2</fullName>
        <ecNumber evidence="1">3.4.21.53</ecNumber>
    </recommendedName>
    <alternativeName>
        <fullName evidence="1">ATP-dependent protease La 2</fullName>
    </alternativeName>
</protein>
<dbReference type="EC" id="3.4.21.53" evidence="1"/>
<dbReference type="EMBL" id="CP000875">
    <property type="protein sequence ID" value="ABX05634.1"/>
    <property type="molecule type" value="Genomic_DNA"/>
</dbReference>
<dbReference type="SMR" id="A9B3R2"/>
<dbReference type="FunCoup" id="A9B3R2">
    <property type="interactions" value="469"/>
</dbReference>
<dbReference type="STRING" id="316274.Haur_2996"/>
<dbReference type="MEROPS" id="S16.001"/>
<dbReference type="KEGG" id="hau:Haur_2996"/>
<dbReference type="eggNOG" id="COG0466">
    <property type="taxonomic scope" value="Bacteria"/>
</dbReference>
<dbReference type="HOGENOM" id="CLU_004109_4_3_0"/>
<dbReference type="InParanoid" id="A9B3R2"/>
<dbReference type="Proteomes" id="UP000000787">
    <property type="component" value="Chromosome"/>
</dbReference>
<dbReference type="GO" id="GO:0005737">
    <property type="term" value="C:cytoplasm"/>
    <property type="evidence" value="ECO:0007669"/>
    <property type="project" value="UniProtKB-SubCell"/>
</dbReference>
<dbReference type="GO" id="GO:0005524">
    <property type="term" value="F:ATP binding"/>
    <property type="evidence" value="ECO:0007669"/>
    <property type="project" value="UniProtKB-UniRule"/>
</dbReference>
<dbReference type="GO" id="GO:0016887">
    <property type="term" value="F:ATP hydrolysis activity"/>
    <property type="evidence" value="ECO:0007669"/>
    <property type="project" value="UniProtKB-UniRule"/>
</dbReference>
<dbReference type="GO" id="GO:0004176">
    <property type="term" value="F:ATP-dependent peptidase activity"/>
    <property type="evidence" value="ECO:0007669"/>
    <property type="project" value="UniProtKB-UniRule"/>
</dbReference>
<dbReference type="GO" id="GO:0043565">
    <property type="term" value="F:sequence-specific DNA binding"/>
    <property type="evidence" value="ECO:0007669"/>
    <property type="project" value="UniProtKB-UniRule"/>
</dbReference>
<dbReference type="GO" id="GO:0004252">
    <property type="term" value="F:serine-type endopeptidase activity"/>
    <property type="evidence" value="ECO:0007669"/>
    <property type="project" value="UniProtKB-UniRule"/>
</dbReference>
<dbReference type="GO" id="GO:0034605">
    <property type="term" value="P:cellular response to heat"/>
    <property type="evidence" value="ECO:0007669"/>
    <property type="project" value="UniProtKB-UniRule"/>
</dbReference>
<dbReference type="GO" id="GO:0006515">
    <property type="term" value="P:protein quality control for misfolded or incompletely synthesized proteins"/>
    <property type="evidence" value="ECO:0007669"/>
    <property type="project" value="UniProtKB-UniRule"/>
</dbReference>
<dbReference type="CDD" id="cd19500">
    <property type="entry name" value="RecA-like_Lon"/>
    <property type="match status" value="1"/>
</dbReference>
<dbReference type="FunFam" id="1.20.5.5270:FF:000002">
    <property type="entry name" value="Lon protease homolog"/>
    <property type="match status" value="1"/>
</dbReference>
<dbReference type="FunFam" id="3.40.50.300:FF:000382">
    <property type="entry name" value="Lon protease homolog 2, peroxisomal"/>
    <property type="match status" value="1"/>
</dbReference>
<dbReference type="Gene3D" id="1.10.8.60">
    <property type="match status" value="1"/>
</dbReference>
<dbReference type="Gene3D" id="1.20.5.5270">
    <property type="match status" value="1"/>
</dbReference>
<dbReference type="Gene3D" id="1.20.58.1480">
    <property type="match status" value="1"/>
</dbReference>
<dbReference type="Gene3D" id="3.30.230.10">
    <property type="match status" value="1"/>
</dbReference>
<dbReference type="Gene3D" id="2.30.130.40">
    <property type="entry name" value="LON domain-like"/>
    <property type="match status" value="1"/>
</dbReference>
<dbReference type="Gene3D" id="3.40.50.300">
    <property type="entry name" value="P-loop containing nucleotide triphosphate hydrolases"/>
    <property type="match status" value="1"/>
</dbReference>
<dbReference type="HAMAP" id="MF_01973">
    <property type="entry name" value="lon_bact"/>
    <property type="match status" value="1"/>
</dbReference>
<dbReference type="InterPro" id="IPR003593">
    <property type="entry name" value="AAA+_ATPase"/>
</dbReference>
<dbReference type="InterPro" id="IPR003959">
    <property type="entry name" value="ATPase_AAA_core"/>
</dbReference>
<dbReference type="InterPro" id="IPR027543">
    <property type="entry name" value="Lon_bac"/>
</dbReference>
<dbReference type="InterPro" id="IPR004815">
    <property type="entry name" value="Lon_bac/euk-typ"/>
</dbReference>
<dbReference type="InterPro" id="IPR054594">
    <property type="entry name" value="Lon_lid"/>
</dbReference>
<dbReference type="InterPro" id="IPR008269">
    <property type="entry name" value="Lon_proteolytic"/>
</dbReference>
<dbReference type="InterPro" id="IPR027065">
    <property type="entry name" value="Lon_Prtase"/>
</dbReference>
<dbReference type="InterPro" id="IPR003111">
    <property type="entry name" value="Lon_prtase_N"/>
</dbReference>
<dbReference type="InterPro" id="IPR046336">
    <property type="entry name" value="Lon_prtase_N_sf"/>
</dbReference>
<dbReference type="InterPro" id="IPR027417">
    <property type="entry name" value="P-loop_NTPase"/>
</dbReference>
<dbReference type="InterPro" id="IPR008268">
    <property type="entry name" value="Peptidase_S16_AS"/>
</dbReference>
<dbReference type="InterPro" id="IPR015947">
    <property type="entry name" value="PUA-like_sf"/>
</dbReference>
<dbReference type="InterPro" id="IPR020568">
    <property type="entry name" value="Ribosomal_Su5_D2-typ_SF"/>
</dbReference>
<dbReference type="InterPro" id="IPR014721">
    <property type="entry name" value="Ribsml_uS5_D2-typ_fold_subgr"/>
</dbReference>
<dbReference type="NCBIfam" id="TIGR00763">
    <property type="entry name" value="lon"/>
    <property type="match status" value="1"/>
</dbReference>
<dbReference type="NCBIfam" id="NF008053">
    <property type="entry name" value="PRK10787.1"/>
    <property type="match status" value="1"/>
</dbReference>
<dbReference type="PANTHER" id="PTHR10046">
    <property type="entry name" value="ATP DEPENDENT LON PROTEASE FAMILY MEMBER"/>
    <property type="match status" value="1"/>
</dbReference>
<dbReference type="Pfam" id="PF00004">
    <property type="entry name" value="AAA"/>
    <property type="match status" value="1"/>
</dbReference>
<dbReference type="Pfam" id="PF05362">
    <property type="entry name" value="Lon_C"/>
    <property type="match status" value="1"/>
</dbReference>
<dbReference type="Pfam" id="PF22667">
    <property type="entry name" value="Lon_lid"/>
    <property type="match status" value="1"/>
</dbReference>
<dbReference type="Pfam" id="PF02190">
    <property type="entry name" value="LON_substr_bdg"/>
    <property type="match status" value="1"/>
</dbReference>
<dbReference type="PIRSF" id="PIRSF001174">
    <property type="entry name" value="Lon_proteas"/>
    <property type="match status" value="1"/>
</dbReference>
<dbReference type="PRINTS" id="PR00830">
    <property type="entry name" value="ENDOLAPTASE"/>
</dbReference>
<dbReference type="SMART" id="SM00382">
    <property type="entry name" value="AAA"/>
    <property type="match status" value="1"/>
</dbReference>
<dbReference type="SMART" id="SM00464">
    <property type="entry name" value="LON"/>
    <property type="match status" value="1"/>
</dbReference>
<dbReference type="SUPFAM" id="SSF52540">
    <property type="entry name" value="P-loop containing nucleoside triphosphate hydrolases"/>
    <property type="match status" value="1"/>
</dbReference>
<dbReference type="SUPFAM" id="SSF88697">
    <property type="entry name" value="PUA domain-like"/>
    <property type="match status" value="1"/>
</dbReference>
<dbReference type="SUPFAM" id="SSF54211">
    <property type="entry name" value="Ribosomal protein S5 domain 2-like"/>
    <property type="match status" value="1"/>
</dbReference>
<dbReference type="PROSITE" id="PS51787">
    <property type="entry name" value="LON_N"/>
    <property type="match status" value="1"/>
</dbReference>
<dbReference type="PROSITE" id="PS51786">
    <property type="entry name" value="LON_PROTEOLYTIC"/>
    <property type="match status" value="1"/>
</dbReference>
<dbReference type="PROSITE" id="PS01046">
    <property type="entry name" value="LON_SER"/>
    <property type="match status" value="1"/>
</dbReference>
<gene>
    <name evidence="1" type="primary">lon2</name>
    <name type="ordered locus">Haur_2996</name>
</gene>
<proteinExistence type="inferred from homology"/>
<name>LON2_HERA2</name>
<comment type="function">
    <text evidence="1">ATP-dependent serine protease that mediates the selective degradation of mutant and abnormal proteins as well as certain short-lived regulatory proteins. Required for cellular homeostasis and for survival from DNA damage and developmental changes induced by stress. Degrades polypeptides processively to yield small peptide fragments that are 5 to 10 amino acids long. Binds to DNA in a double-stranded, site-specific manner.</text>
</comment>
<comment type="catalytic activity">
    <reaction evidence="1">
        <text>Hydrolysis of proteins in presence of ATP.</text>
        <dbReference type="EC" id="3.4.21.53"/>
    </reaction>
</comment>
<comment type="subunit">
    <text evidence="1">Homohexamer. Organized in a ring with a central cavity.</text>
</comment>
<comment type="subcellular location">
    <subcellularLocation>
        <location evidence="1">Cytoplasm</location>
    </subcellularLocation>
</comment>
<comment type="induction">
    <text evidence="1">By heat shock.</text>
</comment>
<comment type="similarity">
    <text evidence="1">Belongs to the peptidase S16 family.</text>
</comment>
<sequence length="815" mass="90406">MADDRQLVDEISAATTLELPVLPLINTVLFPTMVTPLFVARELSMAAIEAAMSADRQIVAVAQRAIEIEEHDTSQLYQVGVIAHIERVLKLPDGTTSVLVQGQQRVQIVDWLATEPYINAQVQIIEPDHESSLAIEAMMRGVLASYEKVVKLSRTMPDDAYVAALNLEDASALADLIASTLPLDIVRRQQLLELFEVEERLRRLSVVLSQEIDVLELEHHIQNQVQKEVDKSQRDFFLREQLKAIQTELGQEDPLTRELNELHDRIVAANLPAKAQAKALEELGRLEMMPPAAPEYSVIRTYLDWLLELPWSKTSADVADLEVAAKVLENNHYGLKKVKERILEFIAVRMLAGDSTKSPILCFVGPPGVGKTSLGRSVAEALGREFVRLSLGGVHDEAEIRGHRRTYIGAMPGRIIQTMKDAGTINPVFMLDEIDKLGNDFRGDPAAALLEVLDPEQNNTFADHYLDLPYDLSKIMFITTANMLDPIDEPLLDRMEIVELPGYIEEEKVQIARKFLIPKQIEANGLKQHPITISDEALRQIIRTYTWEAGVRNLEREIGGICRKIARRVAEKKRYPRRITPTMLTDFLGQPPFDYSRANDRDEIGVATGMVWSSNGGDVVAIETAIVDGKGTTTLTGQLGDVMQESAQAALSYARASSRRLGIDGKRFEKIDIHIHVPEGGVPKDGPSAGITLACSVISALTHRPLRRDVAMTGEITLRGRVLPIGGLRDKILGAYRAGITTMLIPKKNLRDLEEVPNNVRRQITVVAVEHMDEVLPIAFVSNPLERGSQHTSDGDQTSVVLPTITQPQLGSVEL</sequence>
<accession>A9B3R2</accession>
<reference key="1">
    <citation type="journal article" date="2011" name="Stand. Genomic Sci.">
        <title>Complete genome sequence of the filamentous gliding predatory bacterium Herpetosiphon aurantiacus type strain (114-95(T)).</title>
        <authorList>
            <person name="Kiss H."/>
            <person name="Nett M."/>
            <person name="Domin N."/>
            <person name="Martin K."/>
            <person name="Maresca J.A."/>
            <person name="Copeland A."/>
            <person name="Lapidus A."/>
            <person name="Lucas S."/>
            <person name="Berry K.W."/>
            <person name="Glavina Del Rio T."/>
            <person name="Dalin E."/>
            <person name="Tice H."/>
            <person name="Pitluck S."/>
            <person name="Richardson P."/>
            <person name="Bruce D."/>
            <person name="Goodwin L."/>
            <person name="Han C."/>
            <person name="Detter J.C."/>
            <person name="Schmutz J."/>
            <person name="Brettin T."/>
            <person name="Land M."/>
            <person name="Hauser L."/>
            <person name="Kyrpides N.C."/>
            <person name="Ivanova N."/>
            <person name="Goeker M."/>
            <person name="Woyke T."/>
            <person name="Klenk H.P."/>
            <person name="Bryant D.A."/>
        </authorList>
    </citation>
    <scope>NUCLEOTIDE SEQUENCE [LARGE SCALE GENOMIC DNA]</scope>
    <source>
        <strain>ATCC 23779 / DSM 785 / 114-95</strain>
    </source>
</reference>
<evidence type="ECO:0000255" key="1">
    <source>
        <dbReference type="HAMAP-Rule" id="MF_01973"/>
    </source>
</evidence>
<evidence type="ECO:0000255" key="2">
    <source>
        <dbReference type="PROSITE-ProRule" id="PRU01122"/>
    </source>
</evidence>
<evidence type="ECO:0000255" key="3">
    <source>
        <dbReference type="PROSITE-ProRule" id="PRU01123"/>
    </source>
</evidence>
<feature type="chain" id="PRO_0000396574" description="Lon protease 2">
    <location>
        <begin position="1"/>
        <end position="815"/>
    </location>
</feature>
<feature type="domain" description="Lon N-terminal" evidence="3">
    <location>
        <begin position="19"/>
        <end position="212"/>
    </location>
</feature>
<feature type="domain" description="Lon proteolytic" evidence="2">
    <location>
        <begin position="601"/>
        <end position="782"/>
    </location>
</feature>
<feature type="active site" evidence="1">
    <location>
        <position position="688"/>
    </location>
</feature>
<feature type="active site" evidence="1">
    <location>
        <position position="731"/>
    </location>
</feature>
<feature type="binding site" evidence="1">
    <location>
        <begin position="365"/>
        <end position="372"/>
    </location>
    <ligand>
        <name>ATP</name>
        <dbReference type="ChEBI" id="CHEBI:30616"/>
    </ligand>
</feature>
<keyword id="KW-0067">ATP-binding</keyword>
<keyword id="KW-0963">Cytoplasm</keyword>
<keyword id="KW-0378">Hydrolase</keyword>
<keyword id="KW-0547">Nucleotide-binding</keyword>
<keyword id="KW-0645">Protease</keyword>
<keyword id="KW-0720">Serine protease</keyword>
<keyword id="KW-0346">Stress response</keyword>